<gene>
    <name evidence="1" type="primary">hemC</name>
    <name type="ordered locus">RAF_ORF0699</name>
</gene>
<feature type="chain" id="PRO_1000204660" description="Porphobilinogen deaminase">
    <location>
        <begin position="1"/>
        <end position="351"/>
    </location>
</feature>
<feature type="modified residue" description="S-(dipyrrolylmethanemethyl)cysteine" evidence="1">
    <location>
        <position position="242"/>
    </location>
</feature>
<evidence type="ECO:0000255" key="1">
    <source>
        <dbReference type="HAMAP-Rule" id="MF_00260"/>
    </source>
</evidence>
<keyword id="KW-0627">Porphyrin biosynthesis</keyword>
<keyword id="KW-0808">Transferase</keyword>
<comment type="function">
    <text evidence="1">Tetrapolymerization of the monopyrrole PBG into the hydroxymethylbilane pre-uroporphyrinogen in several discrete steps.</text>
</comment>
<comment type="catalytic activity">
    <reaction evidence="1">
        <text>4 porphobilinogen + H2O = hydroxymethylbilane + 4 NH4(+)</text>
        <dbReference type="Rhea" id="RHEA:13185"/>
        <dbReference type="ChEBI" id="CHEBI:15377"/>
        <dbReference type="ChEBI" id="CHEBI:28938"/>
        <dbReference type="ChEBI" id="CHEBI:57845"/>
        <dbReference type="ChEBI" id="CHEBI:58126"/>
        <dbReference type="EC" id="2.5.1.61"/>
    </reaction>
</comment>
<comment type="cofactor">
    <cofactor evidence="1">
        <name>dipyrromethane</name>
        <dbReference type="ChEBI" id="CHEBI:60342"/>
    </cofactor>
    <text evidence="1">Binds 1 dipyrromethane group covalently.</text>
</comment>
<comment type="pathway">
    <text evidence="1">Porphyrin-containing compound metabolism; protoporphyrin-IX biosynthesis; coproporphyrinogen-III from 5-aminolevulinate: step 2/4.</text>
</comment>
<comment type="subunit">
    <text evidence="1">Monomer.</text>
</comment>
<comment type="miscellaneous">
    <text evidence="1">The porphobilinogen subunits are added to the dipyrromethane group.</text>
</comment>
<comment type="similarity">
    <text evidence="1">Belongs to the HMBS family.</text>
</comment>
<reference key="1">
    <citation type="journal article" date="2009" name="BMC Genomics">
        <title>Analysis of the Rickettsia africae genome reveals that virulence acquisition in Rickettsia species may be explained by genome reduction.</title>
        <authorList>
            <person name="Fournier P.-E."/>
            <person name="El Karkouri K."/>
            <person name="Leroy Q."/>
            <person name="Robert C."/>
            <person name="Giumelli B."/>
            <person name="Renesto P."/>
            <person name="Socolovschi C."/>
            <person name="Parola P."/>
            <person name="Audic S."/>
            <person name="Raoult D."/>
        </authorList>
    </citation>
    <scope>NUCLEOTIDE SEQUENCE [LARGE SCALE GENOMIC DNA]</scope>
    <source>
        <strain>ESF-5</strain>
    </source>
</reference>
<protein>
    <recommendedName>
        <fullName evidence="1">Porphobilinogen deaminase</fullName>
        <shortName evidence="1">PBG</shortName>
        <ecNumber evidence="1">2.5.1.61</ecNumber>
    </recommendedName>
    <alternativeName>
        <fullName evidence="1">Hydroxymethylbilane synthase</fullName>
        <shortName evidence="1">HMBS</shortName>
    </alternativeName>
    <alternativeName>
        <fullName evidence="1">Pre-uroporphyrinogen synthase</fullName>
    </alternativeName>
</protein>
<name>HEM3_RICAE</name>
<proteinExistence type="inferred from homology"/>
<dbReference type="EC" id="2.5.1.61" evidence="1"/>
<dbReference type="EMBL" id="CP001612">
    <property type="protein sequence ID" value="ACP53589.1"/>
    <property type="molecule type" value="Genomic_DNA"/>
</dbReference>
<dbReference type="RefSeq" id="WP_012719787.1">
    <property type="nucleotide sequence ID" value="NC_012633.1"/>
</dbReference>
<dbReference type="SMR" id="C3PNS9"/>
<dbReference type="KEGG" id="raf:RAF_ORF0699"/>
<dbReference type="HOGENOM" id="CLU_019704_0_2_5"/>
<dbReference type="UniPathway" id="UPA00251">
    <property type="reaction ID" value="UER00319"/>
</dbReference>
<dbReference type="Proteomes" id="UP000002305">
    <property type="component" value="Chromosome"/>
</dbReference>
<dbReference type="GO" id="GO:0005737">
    <property type="term" value="C:cytoplasm"/>
    <property type="evidence" value="ECO:0007669"/>
    <property type="project" value="TreeGrafter"/>
</dbReference>
<dbReference type="GO" id="GO:0004418">
    <property type="term" value="F:hydroxymethylbilane synthase activity"/>
    <property type="evidence" value="ECO:0007669"/>
    <property type="project" value="UniProtKB-UniRule"/>
</dbReference>
<dbReference type="GO" id="GO:0006782">
    <property type="term" value="P:protoporphyrinogen IX biosynthetic process"/>
    <property type="evidence" value="ECO:0007669"/>
    <property type="project" value="UniProtKB-UniRule"/>
</dbReference>
<dbReference type="CDD" id="cd13647">
    <property type="entry name" value="PBP2_PBGD_2"/>
    <property type="match status" value="1"/>
</dbReference>
<dbReference type="FunFam" id="3.40.190.10:FF:000004">
    <property type="entry name" value="Porphobilinogen deaminase"/>
    <property type="match status" value="1"/>
</dbReference>
<dbReference type="FunFam" id="3.40.190.10:FF:000005">
    <property type="entry name" value="Porphobilinogen deaminase"/>
    <property type="match status" value="1"/>
</dbReference>
<dbReference type="Gene3D" id="3.40.190.10">
    <property type="entry name" value="Periplasmic binding protein-like II"/>
    <property type="match status" value="2"/>
</dbReference>
<dbReference type="Gene3D" id="3.30.160.40">
    <property type="entry name" value="Porphobilinogen deaminase, C-terminal domain"/>
    <property type="match status" value="1"/>
</dbReference>
<dbReference type="HAMAP" id="MF_00260">
    <property type="entry name" value="Porphobil_deam"/>
    <property type="match status" value="1"/>
</dbReference>
<dbReference type="InterPro" id="IPR000860">
    <property type="entry name" value="HemC"/>
</dbReference>
<dbReference type="InterPro" id="IPR022419">
    <property type="entry name" value="Porphobilin_deaminase_cofac_BS"/>
</dbReference>
<dbReference type="InterPro" id="IPR022417">
    <property type="entry name" value="Porphobilin_deaminase_N"/>
</dbReference>
<dbReference type="InterPro" id="IPR022418">
    <property type="entry name" value="Porphobilinogen_deaminase_C"/>
</dbReference>
<dbReference type="InterPro" id="IPR036803">
    <property type="entry name" value="Porphobilinogen_deaminase_C_sf"/>
</dbReference>
<dbReference type="InterPro" id="IPR005728">
    <property type="entry name" value="RPE1"/>
</dbReference>
<dbReference type="NCBIfam" id="TIGR00212">
    <property type="entry name" value="hemC"/>
    <property type="match status" value="1"/>
</dbReference>
<dbReference type="NCBIfam" id="TIGR01045">
    <property type="entry name" value="RPE1"/>
    <property type="match status" value="1"/>
</dbReference>
<dbReference type="PANTHER" id="PTHR11557">
    <property type="entry name" value="PORPHOBILINOGEN DEAMINASE"/>
    <property type="match status" value="1"/>
</dbReference>
<dbReference type="PANTHER" id="PTHR11557:SF0">
    <property type="entry name" value="PORPHOBILINOGEN DEAMINASE"/>
    <property type="match status" value="1"/>
</dbReference>
<dbReference type="Pfam" id="PF01379">
    <property type="entry name" value="Porphobil_deam"/>
    <property type="match status" value="1"/>
</dbReference>
<dbReference type="Pfam" id="PF03900">
    <property type="entry name" value="Porphobil_deamC"/>
    <property type="match status" value="1"/>
</dbReference>
<dbReference type="PIRSF" id="PIRSF001438">
    <property type="entry name" value="4pyrrol_synth_OHMeBilane_synth"/>
    <property type="match status" value="1"/>
</dbReference>
<dbReference type="PRINTS" id="PR00151">
    <property type="entry name" value="PORPHBDMNASE"/>
</dbReference>
<dbReference type="SUPFAM" id="SSF53850">
    <property type="entry name" value="Periplasmic binding protein-like II"/>
    <property type="match status" value="1"/>
</dbReference>
<dbReference type="SUPFAM" id="SSF54782">
    <property type="entry name" value="Porphobilinogen deaminase (hydroxymethylbilane synthase), C-terminal domain"/>
    <property type="match status" value="1"/>
</dbReference>
<dbReference type="PROSITE" id="PS00533">
    <property type="entry name" value="PORPHOBILINOGEN_DEAM"/>
    <property type="match status" value="1"/>
</dbReference>
<organism>
    <name type="scientific">Rickettsia africae (strain ESF-5)</name>
    <dbReference type="NCBI Taxonomy" id="347255"/>
    <lineage>
        <taxon>Bacteria</taxon>
        <taxon>Pseudomonadati</taxon>
        <taxon>Pseudomonadota</taxon>
        <taxon>Alphaproteobacteria</taxon>
        <taxon>Rickettsiales</taxon>
        <taxon>Rickettsiaceae</taxon>
        <taxon>Rickettsieae</taxon>
        <taxon>Rickettsia</taxon>
        <taxon>spotted fever group</taxon>
    </lineage>
</organism>
<sequence length="351" mass="39355">MTNSIRIGTRKSPLALIHTNLVIQQIKQFFPDINCEIVPIITSGDLIQNKPLYDIGGKALFLKEIEQALLDKKIDLAVHSLKDVPGRIPEPLVIAAVLEREDPRDVFVCLKYKSIEELPQNAVIGSSAVRRKAFIQKIRPDLKVTVFRGNVDSRIKKLMTGEVDATILAYTGLKRLEVFNPEYCHLIEYSQMLPCIGQGVIAVEIRKDDNAMLEICNQINHLPTFELIKPERAFLEYLDANCRTPIAAYSQYLDANPRHLSKLAYREVFEGNTEALATAAYKSNRTDVSTGLTYKLPLEVEFGKVSNIQTNFMLGNLDGSKITFHTETTNIKTSTEAGIKAAKMMLEAICK</sequence>
<accession>C3PNS9</accession>